<gene>
    <name evidence="1" type="primary">rplA</name>
    <name type="ordered locus">BARBAKC583_0568</name>
</gene>
<keyword id="KW-0678">Repressor</keyword>
<keyword id="KW-0687">Ribonucleoprotein</keyword>
<keyword id="KW-0689">Ribosomal protein</keyword>
<keyword id="KW-0694">RNA-binding</keyword>
<keyword id="KW-0699">rRNA-binding</keyword>
<keyword id="KW-0810">Translation regulation</keyword>
<keyword id="KW-0820">tRNA-binding</keyword>
<dbReference type="EMBL" id="CP000524">
    <property type="protein sequence ID" value="ABM44465.1"/>
    <property type="molecule type" value="Genomic_DNA"/>
</dbReference>
<dbReference type="RefSeq" id="WP_005766715.1">
    <property type="nucleotide sequence ID" value="NC_008783.1"/>
</dbReference>
<dbReference type="SMR" id="A1USC5"/>
<dbReference type="STRING" id="360095.BARBAKC583_0568"/>
<dbReference type="GeneID" id="4683968"/>
<dbReference type="KEGG" id="bbk:BARBAKC583_0568"/>
<dbReference type="PATRIC" id="fig|360095.6.peg.549"/>
<dbReference type="eggNOG" id="COG0081">
    <property type="taxonomic scope" value="Bacteria"/>
</dbReference>
<dbReference type="HOGENOM" id="CLU_062853_0_0_5"/>
<dbReference type="OrthoDB" id="9803740at2"/>
<dbReference type="Proteomes" id="UP000000643">
    <property type="component" value="Chromosome"/>
</dbReference>
<dbReference type="GO" id="GO:0022625">
    <property type="term" value="C:cytosolic large ribosomal subunit"/>
    <property type="evidence" value="ECO:0007669"/>
    <property type="project" value="TreeGrafter"/>
</dbReference>
<dbReference type="GO" id="GO:0019843">
    <property type="term" value="F:rRNA binding"/>
    <property type="evidence" value="ECO:0007669"/>
    <property type="project" value="UniProtKB-UniRule"/>
</dbReference>
<dbReference type="GO" id="GO:0003735">
    <property type="term" value="F:structural constituent of ribosome"/>
    <property type="evidence" value="ECO:0007669"/>
    <property type="project" value="InterPro"/>
</dbReference>
<dbReference type="GO" id="GO:0000049">
    <property type="term" value="F:tRNA binding"/>
    <property type="evidence" value="ECO:0007669"/>
    <property type="project" value="UniProtKB-KW"/>
</dbReference>
<dbReference type="GO" id="GO:0006417">
    <property type="term" value="P:regulation of translation"/>
    <property type="evidence" value="ECO:0007669"/>
    <property type="project" value="UniProtKB-KW"/>
</dbReference>
<dbReference type="GO" id="GO:0006412">
    <property type="term" value="P:translation"/>
    <property type="evidence" value="ECO:0007669"/>
    <property type="project" value="UniProtKB-UniRule"/>
</dbReference>
<dbReference type="CDD" id="cd00403">
    <property type="entry name" value="Ribosomal_L1"/>
    <property type="match status" value="1"/>
</dbReference>
<dbReference type="FunFam" id="3.40.50.790:FF:000001">
    <property type="entry name" value="50S ribosomal protein L1"/>
    <property type="match status" value="1"/>
</dbReference>
<dbReference type="Gene3D" id="3.30.190.20">
    <property type="match status" value="1"/>
</dbReference>
<dbReference type="Gene3D" id="3.40.50.790">
    <property type="match status" value="1"/>
</dbReference>
<dbReference type="HAMAP" id="MF_01318_B">
    <property type="entry name" value="Ribosomal_uL1_B"/>
    <property type="match status" value="1"/>
</dbReference>
<dbReference type="InterPro" id="IPR005878">
    <property type="entry name" value="Ribosom_uL1_bac-type"/>
</dbReference>
<dbReference type="InterPro" id="IPR002143">
    <property type="entry name" value="Ribosomal_uL1"/>
</dbReference>
<dbReference type="InterPro" id="IPR023674">
    <property type="entry name" value="Ribosomal_uL1-like"/>
</dbReference>
<dbReference type="InterPro" id="IPR028364">
    <property type="entry name" value="Ribosomal_uL1/biogenesis"/>
</dbReference>
<dbReference type="InterPro" id="IPR016095">
    <property type="entry name" value="Ribosomal_uL1_3-a/b-sand"/>
</dbReference>
<dbReference type="NCBIfam" id="TIGR01169">
    <property type="entry name" value="rplA_bact"/>
    <property type="match status" value="1"/>
</dbReference>
<dbReference type="PANTHER" id="PTHR36427">
    <property type="entry name" value="54S RIBOSOMAL PROTEIN L1, MITOCHONDRIAL"/>
    <property type="match status" value="1"/>
</dbReference>
<dbReference type="PANTHER" id="PTHR36427:SF3">
    <property type="entry name" value="LARGE RIBOSOMAL SUBUNIT PROTEIN UL1M"/>
    <property type="match status" value="1"/>
</dbReference>
<dbReference type="Pfam" id="PF00687">
    <property type="entry name" value="Ribosomal_L1"/>
    <property type="match status" value="1"/>
</dbReference>
<dbReference type="PIRSF" id="PIRSF002155">
    <property type="entry name" value="Ribosomal_L1"/>
    <property type="match status" value="1"/>
</dbReference>
<dbReference type="SUPFAM" id="SSF56808">
    <property type="entry name" value="Ribosomal protein L1"/>
    <property type="match status" value="1"/>
</dbReference>
<evidence type="ECO:0000255" key="1">
    <source>
        <dbReference type="HAMAP-Rule" id="MF_01318"/>
    </source>
</evidence>
<evidence type="ECO:0000305" key="2"/>
<comment type="function">
    <text evidence="1">Binds directly to 23S rRNA. The L1 stalk is quite mobile in the ribosome, and is involved in E site tRNA release.</text>
</comment>
<comment type="function">
    <text evidence="1">Protein L1 is also a translational repressor protein, it controls the translation of the L11 operon by binding to its mRNA.</text>
</comment>
<comment type="subunit">
    <text evidence="1">Part of the 50S ribosomal subunit.</text>
</comment>
<comment type="similarity">
    <text evidence="1">Belongs to the universal ribosomal protein uL1 family.</text>
</comment>
<organism>
    <name type="scientific">Bartonella bacilliformis (strain ATCC 35685 / KC583 / Herrer 020/F12,63)</name>
    <dbReference type="NCBI Taxonomy" id="360095"/>
    <lineage>
        <taxon>Bacteria</taxon>
        <taxon>Pseudomonadati</taxon>
        <taxon>Pseudomonadota</taxon>
        <taxon>Alphaproteobacteria</taxon>
        <taxon>Hyphomicrobiales</taxon>
        <taxon>Bartonellaceae</taxon>
        <taxon>Bartonella</taxon>
    </lineage>
</organism>
<sequence length="232" mass="24673">MVKIVKRIKKIREGINFNELYTLTDAVSMVKERAVAKFDETIEISMNLGVDPRHADQMVRGVAHLPNGTGKNIRVAVFARGDKAEEAKAAGADIVGAEDLFETVNGGTINFDRCIATPDMMPLVGRLGKVLGPRSLMPNPKVGTVTTDIAGAVKASKGGAVEFRVEKAGIVHAGVGKASFGAEQLIENIKTFVSAVIKAKPQGAKSEYIKRVAVSSTMGIGIKVDLVTIRSE</sequence>
<feature type="chain" id="PRO_0000307962" description="Large ribosomal subunit protein uL1">
    <location>
        <begin position="1"/>
        <end position="232"/>
    </location>
</feature>
<accession>A1USC5</accession>
<reference key="1">
    <citation type="submission" date="2006-12" db="EMBL/GenBank/DDBJ databases">
        <authorList>
            <person name="Hendrix L."/>
            <person name="Mohamoud Y."/>
            <person name="Radune D."/>
            <person name="Shvartsbeyn A."/>
            <person name="Daugherty S."/>
            <person name="Dodson R."/>
            <person name="Durkin A.S."/>
            <person name="Harkins D."/>
            <person name="Huot H."/>
            <person name="Kothari S.P."/>
            <person name="Madupu R."/>
            <person name="Li J."/>
            <person name="Nelson W.C."/>
            <person name="Shrivastava S."/>
            <person name="Giglio M.G."/>
            <person name="Haft D."/>
            <person name="Selengut J."/>
            <person name="Fraser-Ligget C."/>
            <person name="Seshadri R."/>
        </authorList>
    </citation>
    <scope>NUCLEOTIDE SEQUENCE [LARGE SCALE GENOMIC DNA]</scope>
    <source>
        <strain>ATCC 35685 / KC583 / Herrer 020/F12,63</strain>
    </source>
</reference>
<name>RL1_BARBK</name>
<protein>
    <recommendedName>
        <fullName evidence="1">Large ribosomal subunit protein uL1</fullName>
    </recommendedName>
    <alternativeName>
        <fullName evidence="2">50S ribosomal protein L1</fullName>
    </alternativeName>
</protein>
<proteinExistence type="inferred from homology"/>